<accession>A9R4E5</accession>
<gene>
    <name evidence="1" type="primary">fdhE</name>
    <name type="ordered locus">YpAngola_A3767</name>
</gene>
<organism>
    <name type="scientific">Yersinia pestis bv. Antiqua (strain Angola)</name>
    <dbReference type="NCBI Taxonomy" id="349746"/>
    <lineage>
        <taxon>Bacteria</taxon>
        <taxon>Pseudomonadati</taxon>
        <taxon>Pseudomonadota</taxon>
        <taxon>Gammaproteobacteria</taxon>
        <taxon>Enterobacterales</taxon>
        <taxon>Yersiniaceae</taxon>
        <taxon>Yersinia</taxon>
    </lineage>
</organism>
<comment type="function">
    <text evidence="1">Necessary for formate dehydrogenase activity.</text>
</comment>
<comment type="subcellular location">
    <subcellularLocation>
        <location evidence="1">Cytoplasm</location>
    </subcellularLocation>
</comment>
<comment type="similarity">
    <text evidence="1">Belongs to the FdhE family.</text>
</comment>
<dbReference type="EMBL" id="CP000901">
    <property type="protein sequence ID" value="ABX85187.1"/>
    <property type="molecule type" value="Genomic_DNA"/>
</dbReference>
<dbReference type="RefSeq" id="WP_002209609.1">
    <property type="nucleotide sequence ID" value="NZ_CP009935.1"/>
</dbReference>
<dbReference type="SMR" id="A9R4E5"/>
<dbReference type="GeneID" id="57974659"/>
<dbReference type="KEGG" id="ypg:YpAngola_A3767"/>
<dbReference type="PATRIC" id="fig|349746.12.peg.477"/>
<dbReference type="GO" id="GO:0005829">
    <property type="term" value="C:cytosol"/>
    <property type="evidence" value="ECO:0007669"/>
    <property type="project" value="TreeGrafter"/>
</dbReference>
<dbReference type="GO" id="GO:0008199">
    <property type="term" value="F:ferric iron binding"/>
    <property type="evidence" value="ECO:0007669"/>
    <property type="project" value="TreeGrafter"/>
</dbReference>
<dbReference type="GO" id="GO:0051604">
    <property type="term" value="P:protein maturation"/>
    <property type="evidence" value="ECO:0007669"/>
    <property type="project" value="TreeGrafter"/>
</dbReference>
<dbReference type="CDD" id="cd16341">
    <property type="entry name" value="FdhE"/>
    <property type="match status" value="1"/>
</dbReference>
<dbReference type="FunFam" id="3.90.1670.10:FF:000001">
    <property type="entry name" value="Protein FdhE"/>
    <property type="match status" value="1"/>
</dbReference>
<dbReference type="Gene3D" id="3.90.1670.10">
    <property type="entry name" value="FdhE-like domain"/>
    <property type="match status" value="1"/>
</dbReference>
<dbReference type="HAMAP" id="MF_00611">
    <property type="entry name" value="FdeH"/>
    <property type="match status" value="1"/>
</dbReference>
<dbReference type="InterPro" id="IPR024064">
    <property type="entry name" value="FdhE-like_sf"/>
</dbReference>
<dbReference type="InterPro" id="IPR056796">
    <property type="entry name" value="FdhE_C"/>
</dbReference>
<dbReference type="InterPro" id="IPR056797">
    <property type="entry name" value="FdhE_central"/>
</dbReference>
<dbReference type="InterPro" id="IPR056774">
    <property type="entry name" value="FdhE_N"/>
</dbReference>
<dbReference type="InterPro" id="IPR006452">
    <property type="entry name" value="Formate_DH_accessory"/>
</dbReference>
<dbReference type="NCBIfam" id="TIGR01562">
    <property type="entry name" value="FdhE"/>
    <property type="match status" value="1"/>
</dbReference>
<dbReference type="NCBIfam" id="NF002925">
    <property type="entry name" value="PRK03564.1"/>
    <property type="match status" value="1"/>
</dbReference>
<dbReference type="PANTHER" id="PTHR37689">
    <property type="entry name" value="PROTEIN FDHE"/>
    <property type="match status" value="1"/>
</dbReference>
<dbReference type="PANTHER" id="PTHR37689:SF1">
    <property type="entry name" value="PROTEIN FDHE"/>
    <property type="match status" value="1"/>
</dbReference>
<dbReference type="Pfam" id="PF24860">
    <property type="entry name" value="FdhE_C"/>
    <property type="match status" value="1"/>
</dbReference>
<dbReference type="Pfam" id="PF24859">
    <property type="entry name" value="FdhE_central"/>
    <property type="match status" value="1"/>
</dbReference>
<dbReference type="Pfam" id="PF04216">
    <property type="entry name" value="FdhE_N"/>
    <property type="match status" value="1"/>
</dbReference>
<dbReference type="PIRSF" id="PIRSF018296">
    <property type="entry name" value="Format_dh_formtn"/>
    <property type="match status" value="1"/>
</dbReference>
<dbReference type="SUPFAM" id="SSF144020">
    <property type="entry name" value="FdhE-like"/>
    <property type="match status" value="1"/>
</dbReference>
<name>FDHE_YERPG</name>
<reference key="1">
    <citation type="journal article" date="2010" name="J. Bacteriol.">
        <title>Genome sequence of the deep-rooted Yersinia pestis strain Angola reveals new insights into the evolution and pangenome of the plague bacterium.</title>
        <authorList>
            <person name="Eppinger M."/>
            <person name="Worsham P.L."/>
            <person name="Nikolich M.P."/>
            <person name="Riley D.R."/>
            <person name="Sebastian Y."/>
            <person name="Mou S."/>
            <person name="Achtman M."/>
            <person name="Lindler L.E."/>
            <person name="Ravel J."/>
        </authorList>
    </citation>
    <scope>NUCLEOTIDE SEQUENCE [LARGE SCALE GENOMIC DNA]</scope>
    <source>
        <strain>Angola</strain>
    </source>
</reference>
<evidence type="ECO:0000255" key="1">
    <source>
        <dbReference type="HAMAP-Rule" id="MF_00611"/>
    </source>
</evidence>
<proteinExistence type="inferred from homology"/>
<sequence>MSIRIVPKDQLGKQREKGTTAGNIPPLLFANLKSLYTRRTERLQQLALDNPLADYLDFAAKITEAQQKALHDHPLVLDMQAELVQSAASGKPPLDGSVFPRTEHWRKLLSALIAELRHDAPDHILAVLDNLDKASVHELELYADALLNRDFSQVGSEKAPFIWAALSLYWAQMASQIPGKARAEYGEHRQFCPVCGSIPVSSVVHIGTHNGLRYLHCNLCESEWHVVRIKCSNCEQTRDLNYWSLDSELAAVKAESCGDCGTYLKILYQEKDPQVEAVADDLASLILDAKMEGEGFARSSINPFLFPGE</sequence>
<protein>
    <recommendedName>
        <fullName evidence="1">Protein FdhE homolog</fullName>
    </recommendedName>
</protein>
<keyword id="KW-0963">Cytoplasm</keyword>
<feature type="chain" id="PRO_1000130376" description="Protein FdhE homolog">
    <location>
        <begin position="1"/>
        <end position="309"/>
    </location>
</feature>